<evidence type="ECO:0000250" key="1"/>
<evidence type="ECO:0000255" key="2"/>
<evidence type="ECO:0000269" key="3">
    <source>
    </source>
</evidence>
<evidence type="ECO:0000305" key="4"/>
<organism>
    <name type="scientific">African swine fever virus (strain Badajoz 1971 Vero-adapted)</name>
    <name type="common">Ba71V</name>
    <name type="synonym">ASFV</name>
    <dbReference type="NCBI Taxonomy" id="10498"/>
    <lineage>
        <taxon>Viruses</taxon>
        <taxon>Varidnaviria</taxon>
        <taxon>Bamfordvirae</taxon>
        <taxon>Nucleocytoviricota</taxon>
        <taxon>Pokkesviricetes</taxon>
        <taxon>Asfuvirales</taxon>
        <taxon>Asfarviridae</taxon>
        <taxon>Asfivirus</taxon>
        <taxon>African swine fever virus</taxon>
    </lineage>
</organism>
<protein>
    <recommendedName>
        <fullName>Protein MGF 300-1L</fullName>
    </recommendedName>
</protein>
<dbReference type="EMBL" id="U13763">
    <property type="protein sequence ID" value="AAC54518.1"/>
    <property type="molecule type" value="Genomic_DNA"/>
</dbReference>
<dbReference type="EMBL" id="U18466">
    <property type="protein sequence ID" value="AAA65250.2"/>
    <property type="molecule type" value="Genomic_DNA"/>
</dbReference>
<dbReference type="RefSeq" id="NP_042714.2">
    <property type="nucleotide sequence ID" value="NC_001659.2"/>
</dbReference>
<dbReference type="GeneID" id="22220404"/>
<dbReference type="KEGG" id="vg:22220404"/>
<dbReference type="Proteomes" id="UP000000624">
    <property type="component" value="Segment"/>
</dbReference>
<dbReference type="GO" id="GO:0033644">
    <property type="term" value="C:host cell membrane"/>
    <property type="evidence" value="ECO:0007669"/>
    <property type="project" value="UniProtKB-SubCell"/>
</dbReference>
<dbReference type="GO" id="GO:0016020">
    <property type="term" value="C:membrane"/>
    <property type="evidence" value="ECO:0007669"/>
    <property type="project" value="UniProtKB-KW"/>
</dbReference>
<organismHost>
    <name type="scientific">Ornithodoros</name>
    <name type="common">relapsing fever ticks</name>
    <dbReference type="NCBI Taxonomy" id="6937"/>
</organismHost>
<organismHost>
    <name type="scientific">Sus scrofa</name>
    <name type="common">Pig</name>
    <dbReference type="NCBI Taxonomy" id="9823"/>
</organismHost>
<proteinExistence type="evidence at transcript level"/>
<sequence>MVSLTTCCLKNIVNQHACVENTVLLYHLGLRWNCKTLYQCTQCNGVNYTNSHSDQCKNKDLFLMKVIVKKNLAVTRTLLSWGASPEYARLFCRNTEEEQALNVQHVADVSSSKILERLTMSYKENDEQLLITFYLLNLSTKFSTNLREQVRFNIVSYIICDLAIHQTFKTFYAKNYSLSTLYCIFLAIYYKLYTALRKMVKIYPGLKRFAYLIGFMFDDETVMETYNSTDDEISECKNRIIAIKGYYGNIHCRSDIDHMYAFSQNDYW</sequence>
<reference key="1">
    <citation type="journal article" date="1995" name="J. Gen. Virol.">
        <title>A set of African swine fever virus tandem repeats shares similarities with SAR-like sequences.</title>
        <authorList>
            <person name="Almazan F."/>
            <person name="Murguia J.R."/>
            <person name="Rodriguez J.M."/>
            <person name="de la Vega I."/>
            <person name="Vinuela E."/>
        </authorList>
    </citation>
    <scope>NUCLEOTIDE SEQUENCE [GENOMIC DNA]</scope>
</reference>
<reference key="2">
    <citation type="journal article" date="1995" name="Virology">
        <title>Analysis of the complete nucleotide sequence of African swine fever virus.</title>
        <authorList>
            <person name="Yanez R.J."/>
            <person name="Rodriguez J.M."/>
            <person name="Nogal M.L."/>
            <person name="Yuste L."/>
            <person name="Enriquez C."/>
            <person name="Rodriguez J.F."/>
            <person name="Vinuela E."/>
        </authorList>
    </citation>
    <scope>NUCLEOTIDE SEQUENCE [LARGE SCALE GENOMIC DNA]</scope>
</reference>
<reference key="3">
    <citation type="submission" date="2014-10" db="EMBL/GenBank/DDBJ databases">
        <authorList>
            <person name="Rodriguez J.M."/>
            <person name="Salas M.L."/>
        </authorList>
    </citation>
    <scope>SEQUENCE REVISION</scope>
</reference>
<reference key="4">
    <citation type="journal article" date="2020" name="J. Virol.">
        <title>The African Swine Fever Virus Transcriptome.</title>
        <authorList>
            <person name="Cackett G."/>
            <person name="Matelska D."/>
            <person name="Sykora M."/>
            <person name="Portugal R."/>
            <person name="Malecki M."/>
            <person name="Baehler J."/>
            <person name="Dixon L."/>
            <person name="Werner F."/>
        </authorList>
    </citation>
    <scope>INDUCTION</scope>
</reference>
<keyword id="KW-0244">Early protein</keyword>
<keyword id="KW-0325">Glycoprotein</keyword>
<keyword id="KW-1043">Host membrane</keyword>
<keyword id="KW-0472">Membrane</keyword>
<keyword id="KW-1185">Reference proteome</keyword>
<keyword id="KW-0812">Transmembrane</keyword>
<keyword id="KW-1133">Transmembrane helix</keyword>
<gene>
    <name type="ordered locus">BA71V-019</name>
    <name type="ORF">J268L</name>
</gene>
<comment type="function">
    <text evidence="1">Plays a role in virus cell tropism, and may be required for efficient virus replication in macrophages.</text>
</comment>
<comment type="subcellular location">
    <subcellularLocation>
        <location evidence="4">Host membrane</location>
        <topology evidence="4">Single-pass membrane protein</topology>
    </subcellularLocation>
</comment>
<comment type="induction">
    <text evidence="3">Expressed in the early phase of the viral replicative cycle.</text>
</comment>
<comment type="similarity">
    <text evidence="4">Belongs to the asfivirus MGF 300 family.</text>
</comment>
<accession>Q89705</accession>
<name>3001L_ASFB7</name>
<feature type="chain" id="PRO_0000373226" description="Protein MGF 300-1L">
    <location>
        <begin position="1"/>
        <end position="268"/>
    </location>
</feature>
<feature type="topological domain" description="Cytoplasmic" evidence="2">
    <location>
        <begin position="1"/>
        <end position="175"/>
    </location>
</feature>
<feature type="transmembrane region" description="Helical" evidence="2">
    <location>
        <begin position="176"/>
        <end position="193"/>
    </location>
</feature>
<feature type="topological domain" description="Extracellular" evidence="2">
    <location>
        <begin position="194"/>
        <end position="268"/>
    </location>
</feature>
<feature type="glycosylation site" description="N-linked (GlcNAc...) asparagine; by host" evidence="2">
    <location>
        <position position="227"/>
    </location>
</feature>
<feature type="sequence conflict" description="In Ref. 1; AAC54518." evidence="4" ref="1">
    <original>R</original>
    <variation>C</variation>
    <location>
        <position position="117"/>
    </location>
</feature>
<feature type="sequence conflict" description="In Ref. 1; AAC54518." evidence="4" ref="1">
    <original>M</original>
    <variation>K</variation>
    <location>
        <position position="120"/>
    </location>
</feature>